<reference key="1">
    <citation type="submission" date="2004-11" db="EMBL/GenBank/DDBJ databases">
        <authorList>
            <consortium name="The German cDNA consortium"/>
        </authorList>
    </citation>
    <scope>NUCLEOTIDE SEQUENCE [LARGE SCALE MRNA]</scope>
    <source>
        <tissue>Brain cortex</tissue>
    </source>
</reference>
<keyword id="KW-0496">Mitochondrion</keyword>
<keyword id="KW-1185">Reference proteome</keyword>
<keyword id="KW-0687">Ribonucleoprotein</keyword>
<keyword id="KW-0689">Ribosomal protein</keyword>
<keyword id="KW-0809">Transit peptide</keyword>
<name>RM22_PONAB</name>
<protein>
    <recommendedName>
        <fullName evidence="3">Large ribosomal subunit protein uL22m</fullName>
    </recommendedName>
    <alternativeName>
        <fullName>39S ribosomal protein L22, mitochondrial</fullName>
        <shortName>L22mt</shortName>
        <shortName>MRP-L22</shortName>
    </alternativeName>
</protein>
<proteinExistence type="evidence at transcript level"/>
<evidence type="ECO:0000250" key="1"/>
<evidence type="ECO:0000250" key="2">
    <source>
        <dbReference type="UniProtKB" id="Q9NWU5"/>
    </source>
</evidence>
<evidence type="ECO:0000305" key="3"/>
<comment type="subunit">
    <text evidence="2">Component of the mitochondrial ribosome large subunit (39S) which comprises a 16S rRNA and about 50 distinct proteins.</text>
</comment>
<comment type="subcellular location">
    <subcellularLocation>
        <location evidence="2">Mitochondrion</location>
    </subcellularLocation>
</comment>
<comment type="similarity">
    <text evidence="3">Belongs to the universal ribosomal protein uL22 family.</text>
</comment>
<dbReference type="EMBL" id="CR859042">
    <property type="protein sequence ID" value="CAH91237.1"/>
    <property type="molecule type" value="mRNA"/>
</dbReference>
<dbReference type="EMBL" id="CR860157">
    <property type="protein sequence ID" value="CAH92300.1"/>
    <property type="molecule type" value="mRNA"/>
</dbReference>
<dbReference type="RefSeq" id="NP_001126345.1">
    <property type="nucleotide sequence ID" value="NM_001132873.1"/>
</dbReference>
<dbReference type="SMR" id="Q5RAH3"/>
<dbReference type="FunCoup" id="Q5RAH3">
    <property type="interactions" value="1721"/>
</dbReference>
<dbReference type="STRING" id="9601.ENSPPYP00000017881"/>
<dbReference type="GeneID" id="100173326"/>
<dbReference type="KEGG" id="pon:100173326"/>
<dbReference type="CTD" id="29093"/>
<dbReference type="eggNOG" id="KOG1711">
    <property type="taxonomic scope" value="Eukaryota"/>
</dbReference>
<dbReference type="InParanoid" id="Q5RAH3"/>
<dbReference type="OrthoDB" id="416470at2759"/>
<dbReference type="Proteomes" id="UP000001595">
    <property type="component" value="Unplaced"/>
</dbReference>
<dbReference type="GO" id="GO:0005762">
    <property type="term" value="C:mitochondrial large ribosomal subunit"/>
    <property type="evidence" value="ECO:0000250"/>
    <property type="project" value="UniProtKB"/>
</dbReference>
<dbReference type="GO" id="GO:0005739">
    <property type="term" value="C:mitochondrion"/>
    <property type="evidence" value="ECO:0000250"/>
    <property type="project" value="UniProtKB"/>
</dbReference>
<dbReference type="GO" id="GO:0003735">
    <property type="term" value="F:structural constituent of ribosome"/>
    <property type="evidence" value="ECO:0007669"/>
    <property type="project" value="InterPro"/>
</dbReference>
<dbReference type="GO" id="GO:0006412">
    <property type="term" value="P:translation"/>
    <property type="evidence" value="ECO:0007669"/>
    <property type="project" value="InterPro"/>
</dbReference>
<dbReference type="CDD" id="cd00336">
    <property type="entry name" value="Ribosomal_L22"/>
    <property type="match status" value="1"/>
</dbReference>
<dbReference type="FunFam" id="3.90.470.10:FF:000009">
    <property type="entry name" value="39S ribosomal protein L22, mitochondrial"/>
    <property type="match status" value="1"/>
</dbReference>
<dbReference type="Gene3D" id="3.90.470.10">
    <property type="entry name" value="Ribosomal protein L22/L17"/>
    <property type="match status" value="1"/>
</dbReference>
<dbReference type="InterPro" id="IPR001063">
    <property type="entry name" value="Ribosomal_uL22"/>
</dbReference>
<dbReference type="InterPro" id="IPR047867">
    <property type="entry name" value="Ribosomal_uL22_bac/org-type"/>
</dbReference>
<dbReference type="InterPro" id="IPR036394">
    <property type="entry name" value="Ribosomal_uL22_sf"/>
</dbReference>
<dbReference type="PANTHER" id="PTHR13501">
    <property type="entry name" value="CHLOROPLAST 50S RIBOSOMAL PROTEIN L22-RELATED"/>
    <property type="match status" value="1"/>
</dbReference>
<dbReference type="PANTHER" id="PTHR13501:SF8">
    <property type="entry name" value="LARGE RIBOSOMAL SUBUNIT PROTEIN UL22M"/>
    <property type="match status" value="1"/>
</dbReference>
<dbReference type="Pfam" id="PF00237">
    <property type="entry name" value="Ribosomal_L22"/>
    <property type="match status" value="1"/>
</dbReference>
<dbReference type="SUPFAM" id="SSF54843">
    <property type="entry name" value="Ribosomal protein L22"/>
    <property type="match status" value="1"/>
</dbReference>
<accession>Q5RAH3</accession>
<accession>Q5R7G0</accession>
<organism>
    <name type="scientific">Pongo abelii</name>
    <name type="common">Sumatran orangutan</name>
    <name type="synonym">Pongo pygmaeus abelii</name>
    <dbReference type="NCBI Taxonomy" id="9601"/>
    <lineage>
        <taxon>Eukaryota</taxon>
        <taxon>Metazoa</taxon>
        <taxon>Chordata</taxon>
        <taxon>Craniata</taxon>
        <taxon>Vertebrata</taxon>
        <taxon>Euteleostomi</taxon>
        <taxon>Mammalia</taxon>
        <taxon>Eutheria</taxon>
        <taxon>Euarchontoglires</taxon>
        <taxon>Primates</taxon>
        <taxon>Haplorrhini</taxon>
        <taxon>Catarrhini</taxon>
        <taxon>Hominidae</taxon>
        <taxon>Pongo</taxon>
    </lineage>
</organism>
<feature type="transit peptide" description="Mitochondrion" evidence="1">
    <location>
        <begin position="1"/>
        <end position="40"/>
    </location>
</feature>
<feature type="chain" id="PRO_0000261646" description="Large ribosomal subunit protein uL22m">
    <location>
        <begin position="41"/>
        <end position="206"/>
    </location>
</feature>
<feature type="sequence conflict" description="In Ref. 1; CAH92300." evidence="3" ref="1">
    <original>R</original>
    <variation>K</variation>
    <location>
        <position position="22"/>
    </location>
</feature>
<feature type="sequence conflict" description="In Ref. 1; CAH92300." evidence="3" ref="1">
    <original>G</original>
    <variation>GLLSFHS</variation>
    <location>
        <position position="26"/>
    </location>
</feature>
<feature type="sequence conflict" description="In Ref. 1; CAH92300." evidence="3" ref="1">
    <original>N</original>
    <variation>D</variation>
    <location>
        <position position="49"/>
    </location>
</feature>
<feature type="sequence conflict" description="In Ref. 1; CAH92300." evidence="3" ref="1">
    <original>R</original>
    <variation>K</variation>
    <location>
        <position position="163"/>
    </location>
</feature>
<feature type="sequence conflict" description="In Ref. 1; CAH92300." evidence="3" ref="1">
    <original>H</original>
    <variation>R</variation>
    <location>
        <position position="167"/>
    </location>
</feature>
<gene>
    <name type="primary">MRPL22</name>
</gene>
<sequence>MAAAVLGQLGALWIHNLRSRGRLAWGVLPQSYVHTSASLDISRKWEKKNKIVYPPQLPGEPRRPAEIYHCRRQIKYSKDKMWYLAKLIRGMSIDQALAQLEFNDKKGAKIIKEVLLEAQDMAVRDHNVEFRSNLYIAESTSGRGQYLKRIRYHGRGRFGIMERVYCHYFVKLVEGPPPPPEPPKMAVAHAKEYIQQLRSRTIIHTL</sequence>